<organism>
    <name type="scientific">Pongo abelii</name>
    <name type="common">Sumatran orangutan</name>
    <name type="synonym">Pongo pygmaeus abelii</name>
    <dbReference type="NCBI Taxonomy" id="9601"/>
    <lineage>
        <taxon>Eukaryota</taxon>
        <taxon>Metazoa</taxon>
        <taxon>Chordata</taxon>
        <taxon>Craniata</taxon>
        <taxon>Vertebrata</taxon>
        <taxon>Euteleostomi</taxon>
        <taxon>Mammalia</taxon>
        <taxon>Eutheria</taxon>
        <taxon>Euarchontoglires</taxon>
        <taxon>Primates</taxon>
        <taxon>Haplorrhini</taxon>
        <taxon>Catarrhini</taxon>
        <taxon>Hominidae</taxon>
        <taxon>Pongo</taxon>
    </lineage>
</organism>
<keyword id="KW-0028">Amino-acid biosynthesis</keyword>
<keyword id="KW-0067">ATP-binding</keyword>
<keyword id="KW-0418">Kinase</keyword>
<keyword id="KW-0496">Mitochondrion</keyword>
<keyword id="KW-0511">Multifunctional enzyme</keyword>
<keyword id="KW-0521">NADP</keyword>
<keyword id="KW-0547">Nucleotide-binding</keyword>
<keyword id="KW-0560">Oxidoreductase</keyword>
<keyword id="KW-0641">Proline biosynthesis</keyword>
<keyword id="KW-1185">Reference proteome</keyword>
<keyword id="KW-0808">Transferase</keyword>
<evidence type="ECO:0000250" key="1"/>
<evidence type="ECO:0000250" key="2">
    <source>
        <dbReference type="UniProtKB" id="P54886"/>
    </source>
</evidence>
<evidence type="ECO:0000250" key="3">
    <source>
        <dbReference type="UniProtKB" id="Q9Z110"/>
    </source>
</evidence>
<evidence type="ECO:0000305" key="4"/>
<feature type="chain" id="PRO_0000294073" description="Delta-1-pyrroline-5-carboxylate synthase">
    <location>
        <begin position="1"/>
        <end position="795"/>
    </location>
</feature>
<feature type="region of interest" description="Glutamate 5-kinase">
    <location>
        <begin position="1"/>
        <end position="361"/>
    </location>
</feature>
<feature type="region of interest" description="Gamma-glutamyl phosphate reductase">
    <location>
        <begin position="362"/>
        <end position="795"/>
    </location>
</feature>
<feature type="binding site" evidence="1">
    <location>
        <position position="117"/>
    </location>
    <ligand>
        <name>substrate</name>
    </ligand>
</feature>
<feature type="binding site" evidence="1">
    <location>
        <position position="223"/>
    </location>
    <ligand>
        <name>substrate</name>
    </ligand>
</feature>
<feature type="binding site" evidence="1">
    <location>
        <position position="246"/>
    </location>
    <ligand>
        <name>substrate</name>
    </ligand>
</feature>
<feature type="binding site" evidence="1">
    <location>
        <begin position="266"/>
        <end position="267"/>
    </location>
    <ligand>
        <name>ATP</name>
        <dbReference type="ChEBI" id="CHEBI:30616"/>
    </ligand>
</feature>
<feature type="binding site" evidence="1">
    <location>
        <begin position="305"/>
        <end position="311"/>
    </location>
    <ligand>
        <name>ATP</name>
        <dbReference type="ChEBI" id="CHEBI:30616"/>
    </ligand>
</feature>
<feature type="modified residue" description="N6-succinyllysine" evidence="3">
    <location>
        <position position="311"/>
    </location>
</feature>
<feature type="modified residue" description="N6-succinyllysine" evidence="3">
    <location>
        <position position="347"/>
    </location>
</feature>
<feature type="modified residue" description="N6-succinyllysine" evidence="3">
    <location>
        <position position="550"/>
    </location>
</feature>
<name>P5CS_PONAB</name>
<accession>Q5R4M8</accession>
<reference key="1">
    <citation type="submission" date="2004-11" db="EMBL/GenBank/DDBJ databases">
        <authorList>
            <consortium name="The German cDNA consortium"/>
        </authorList>
    </citation>
    <scope>NUCLEOTIDE SEQUENCE [LARGE SCALE MRNA]</scope>
    <source>
        <tissue>Brain cortex</tissue>
    </source>
</reference>
<protein>
    <recommendedName>
        <fullName>Delta-1-pyrroline-5-carboxylate synthase</fullName>
        <shortName>P5CS</shortName>
    </recommendedName>
    <alternativeName>
        <fullName>Aldehyde dehydrogenase family 18 member A1</fullName>
    </alternativeName>
    <domain>
        <recommendedName>
            <fullName>Glutamate 5-kinase</fullName>
            <shortName>GK</shortName>
            <ecNumber evidence="2">2.7.2.11</ecNumber>
        </recommendedName>
        <alternativeName>
            <fullName>Gamma-glutamyl kinase</fullName>
        </alternativeName>
    </domain>
    <domain>
        <recommendedName>
            <fullName>Gamma-glutamyl phosphate reductase</fullName>
            <shortName>GPR</shortName>
            <ecNumber evidence="2">1.2.1.41</ecNumber>
        </recommendedName>
        <alternativeName>
            <fullName>Glutamate-5-semialdehyde dehydrogenase</fullName>
        </alternativeName>
        <alternativeName>
            <fullName>Glutamyl-gamma-semialdehyde dehydrogenase</fullName>
        </alternativeName>
    </domain>
</protein>
<dbReference type="EC" id="2.7.2.11" evidence="2"/>
<dbReference type="EC" id="1.2.1.41" evidence="2"/>
<dbReference type="EMBL" id="CR861217">
    <property type="protein sequence ID" value="CAH93288.1"/>
    <property type="molecule type" value="mRNA"/>
</dbReference>
<dbReference type="RefSeq" id="XP_024108860.1">
    <property type="nucleotide sequence ID" value="XM_024253092.3"/>
</dbReference>
<dbReference type="RefSeq" id="XP_063583203.1">
    <property type="nucleotide sequence ID" value="XM_063727133.1"/>
</dbReference>
<dbReference type="SMR" id="Q5R4M8"/>
<dbReference type="FunCoup" id="Q5R4M8">
    <property type="interactions" value="1327"/>
</dbReference>
<dbReference type="STRING" id="9601.ENSPPYP00000002911"/>
<dbReference type="Ensembl" id="ENSPPYT00000003013.3">
    <property type="protein sequence ID" value="ENSPPYP00000002911.3"/>
    <property type="gene ID" value="ENSPPYG00000002509.3"/>
</dbReference>
<dbReference type="GeneID" id="100173488"/>
<dbReference type="eggNOG" id="KOG1154">
    <property type="taxonomic scope" value="Eukaryota"/>
</dbReference>
<dbReference type="eggNOG" id="KOG4165">
    <property type="taxonomic scope" value="Eukaryota"/>
</dbReference>
<dbReference type="GeneTree" id="ENSGT00500000044903"/>
<dbReference type="InParanoid" id="Q5R4M8"/>
<dbReference type="OMA" id="PPMFIVD"/>
<dbReference type="OrthoDB" id="1934954at2759"/>
<dbReference type="UniPathway" id="UPA00098">
    <property type="reaction ID" value="UER00359"/>
</dbReference>
<dbReference type="UniPathway" id="UPA00098">
    <property type="reaction ID" value="UER00360"/>
</dbReference>
<dbReference type="Proteomes" id="UP000001595">
    <property type="component" value="Chromosome 10"/>
</dbReference>
<dbReference type="GO" id="GO:0005743">
    <property type="term" value="C:mitochondrial inner membrane"/>
    <property type="evidence" value="ECO:0007669"/>
    <property type="project" value="UniProtKB-KW"/>
</dbReference>
<dbReference type="GO" id="GO:0005759">
    <property type="term" value="C:mitochondrial matrix"/>
    <property type="evidence" value="ECO:0007669"/>
    <property type="project" value="UniProtKB-SubCell"/>
</dbReference>
<dbReference type="GO" id="GO:0005739">
    <property type="term" value="C:mitochondrion"/>
    <property type="evidence" value="ECO:0000250"/>
    <property type="project" value="UniProtKB"/>
</dbReference>
<dbReference type="GO" id="GO:0005524">
    <property type="term" value="F:ATP binding"/>
    <property type="evidence" value="ECO:0007669"/>
    <property type="project" value="UniProtKB-KW"/>
</dbReference>
<dbReference type="GO" id="GO:0004349">
    <property type="term" value="F:glutamate 5-kinase activity"/>
    <property type="evidence" value="ECO:0000250"/>
    <property type="project" value="UniProtKB"/>
</dbReference>
<dbReference type="GO" id="GO:0004350">
    <property type="term" value="F:glutamate-5-semialdehyde dehydrogenase activity"/>
    <property type="evidence" value="ECO:0000250"/>
    <property type="project" value="UniProtKB"/>
</dbReference>
<dbReference type="GO" id="GO:0042802">
    <property type="term" value="F:identical protein binding"/>
    <property type="evidence" value="ECO:0007669"/>
    <property type="project" value="Ensembl"/>
</dbReference>
<dbReference type="GO" id="GO:0019240">
    <property type="term" value="P:citrulline biosynthetic process"/>
    <property type="evidence" value="ECO:0000250"/>
    <property type="project" value="UniProtKB"/>
</dbReference>
<dbReference type="GO" id="GO:0006536">
    <property type="term" value="P:glutamate metabolic process"/>
    <property type="evidence" value="ECO:0000250"/>
    <property type="project" value="UniProtKB"/>
</dbReference>
<dbReference type="GO" id="GO:0055129">
    <property type="term" value="P:L-proline biosynthetic process"/>
    <property type="evidence" value="ECO:0007669"/>
    <property type="project" value="UniProtKB-UniPathway"/>
</dbReference>
<dbReference type="GO" id="GO:0006592">
    <property type="term" value="P:ornithine biosynthetic process"/>
    <property type="evidence" value="ECO:0007669"/>
    <property type="project" value="Ensembl"/>
</dbReference>
<dbReference type="GO" id="GO:0006561">
    <property type="term" value="P:proline biosynthetic process"/>
    <property type="evidence" value="ECO:0000250"/>
    <property type="project" value="UniProtKB"/>
</dbReference>
<dbReference type="CDD" id="cd04256">
    <property type="entry name" value="AAK_P5CS_ProBA"/>
    <property type="match status" value="1"/>
</dbReference>
<dbReference type="CDD" id="cd07079">
    <property type="entry name" value="ALDH_F18-19_ProA-GPR"/>
    <property type="match status" value="1"/>
</dbReference>
<dbReference type="FunFam" id="3.40.1160.10:FF:000010">
    <property type="entry name" value="Delta-1-pyrroline-5-carboxylate synthase"/>
    <property type="match status" value="1"/>
</dbReference>
<dbReference type="FunFam" id="3.40.309.10:FF:000011">
    <property type="entry name" value="Delta-1-pyrroline-5-carboxylate synthase"/>
    <property type="match status" value="1"/>
</dbReference>
<dbReference type="Gene3D" id="3.40.1160.10">
    <property type="entry name" value="Acetylglutamate kinase-like"/>
    <property type="match status" value="1"/>
</dbReference>
<dbReference type="Gene3D" id="3.40.605.10">
    <property type="entry name" value="Aldehyde Dehydrogenase, Chain A, domain 1"/>
    <property type="match status" value="1"/>
</dbReference>
<dbReference type="Gene3D" id="3.40.309.10">
    <property type="entry name" value="Aldehyde Dehydrogenase, Chain A, domain 2"/>
    <property type="match status" value="1"/>
</dbReference>
<dbReference type="HAMAP" id="MF_00412">
    <property type="entry name" value="ProA"/>
    <property type="match status" value="1"/>
</dbReference>
<dbReference type="HAMAP" id="MF_00456">
    <property type="entry name" value="ProB"/>
    <property type="match status" value="1"/>
</dbReference>
<dbReference type="InterPro" id="IPR036393">
    <property type="entry name" value="AceGlu_kinase-like_sf"/>
</dbReference>
<dbReference type="InterPro" id="IPR016161">
    <property type="entry name" value="Ald_DH/histidinol_DH"/>
</dbReference>
<dbReference type="InterPro" id="IPR016163">
    <property type="entry name" value="Ald_DH_C"/>
</dbReference>
<dbReference type="InterPro" id="IPR016162">
    <property type="entry name" value="Ald_DH_N"/>
</dbReference>
<dbReference type="InterPro" id="IPR015590">
    <property type="entry name" value="Aldehyde_DH_dom"/>
</dbReference>
<dbReference type="InterPro" id="IPR001048">
    <property type="entry name" value="Asp/Glu/Uridylate_kinase"/>
</dbReference>
<dbReference type="InterPro" id="IPR020593">
    <property type="entry name" value="G-glutamylP_reductase_CS"/>
</dbReference>
<dbReference type="InterPro" id="IPR041744">
    <property type="entry name" value="G5K_ProBA"/>
</dbReference>
<dbReference type="InterPro" id="IPR001057">
    <property type="entry name" value="Glu/AcGlu_kinase"/>
</dbReference>
<dbReference type="InterPro" id="IPR005715">
    <property type="entry name" value="Glu_5kinase/COase_Synthase"/>
</dbReference>
<dbReference type="InterPro" id="IPR019797">
    <property type="entry name" value="Glutamate_5-kinase_CS"/>
</dbReference>
<dbReference type="InterPro" id="IPR000965">
    <property type="entry name" value="GPR_dom"/>
</dbReference>
<dbReference type="InterPro" id="IPR005766">
    <property type="entry name" value="P5_carboxy_syn"/>
</dbReference>
<dbReference type="NCBIfam" id="TIGR01092">
    <property type="entry name" value="P5CS"/>
    <property type="match status" value="1"/>
</dbReference>
<dbReference type="NCBIfam" id="NF001221">
    <property type="entry name" value="PRK00197.1"/>
    <property type="match status" value="1"/>
</dbReference>
<dbReference type="NCBIfam" id="TIGR00407">
    <property type="entry name" value="proA"/>
    <property type="match status" value="1"/>
</dbReference>
<dbReference type="PANTHER" id="PTHR11063:SF8">
    <property type="entry name" value="DELTA-1-PYRROLINE-5-CARBOXYLATE SYNTHASE"/>
    <property type="match status" value="1"/>
</dbReference>
<dbReference type="PANTHER" id="PTHR11063">
    <property type="entry name" value="GLUTAMATE SEMIALDEHYDE DEHYDROGENASE"/>
    <property type="match status" value="1"/>
</dbReference>
<dbReference type="Pfam" id="PF00696">
    <property type="entry name" value="AA_kinase"/>
    <property type="match status" value="1"/>
</dbReference>
<dbReference type="Pfam" id="PF00171">
    <property type="entry name" value="Aldedh"/>
    <property type="match status" value="1"/>
</dbReference>
<dbReference type="PIRSF" id="PIRSF036429">
    <property type="entry name" value="P5C_syn"/>
    <property type="match status" value="1"/>
</dbReference>
<dbReference type="PRINTS" id="PR00474">
    <property type="entry name" value="GLU5KINASE"/>
</dbReference>
<dbReference type="SUPFAM" id="SSF53720">
    <property type="entry name" value="ALDH-like"/>
    <property type="match status" value="1"/>
</dbReference>
<dbReference type="SUPFAM" id="SSF53633">
    <property type="entry name" value="Carbamate kinase-like"/>
    <property type="match status" value="1"/>
</dbReference>
<dbReference type="PROSITE" id="PS00902">
    <property type="entry name" value="GLUTAMATE_5_KINASE"/>
    <property type="match status" value="1"/>
</dbReference>
<dbReference type="PROSITE" id="PS01223">
    <property type="entry name" value="PROA"/>
    <property type="match status" value="1"/>
</dbReference>
<proteinExistence type="evidence at transcript level"/>
<gene>
    <name type="primary">ALDH18A1</name>
</gene>
<sequence length="795" mass="87341">MLSQVYRYGFQPFNQHLLPWVQCTTISRSHCIQPSVIRHVRSWSNIPFITVPLSRTHGKSFAHRSELKHAKRIVVKLGSAVVTRGDECGLALGRLASIVEQVSVLQNQGREMMLVTSGAVAFGKQRLRHEILLSQSVRQALHSGQNQLKEMAIPVLEARACAAAGQSGLMALYEAMFTQYSICAAQILVTNLDFHDEQKRRNLNGTLHELLRMNIVPIVNTNDAVVPPAEPNSDLQGVNVISVKDNDSLAARLAVEMKTDLLIVLSDVEGLFDSPPGSDDAKLIDIFYPGDQQSVTFGTKSRVGMGGMEAKVKAALWALQGGTSVVIANGTHPKVSGHVITDIVEGKKVGTFFSEVKPAGPTVEQQGEMARSGGRMLATLEPEQRAEIIHHLADLLTDQRDEILLANKKDLEEAEGRLAPPLLKRLSLSTSKLNSLAIGLRQIAASSQDSVGRVLRRTRIAKNLELEQVTVPIGVLLVIFESRPDCLPQVAALAIASGNGLLLKGGKEAAHSNRILHLLTQEALSIHGVKEAVQLVNTREEVEDLCRLDKMIDLIIPRGSSQLVRDIQKAAKGIPVMGHSEGICHMYVDSEASVDKVTRLVRDSKCEYPAACNALETLLIHRDLLRTPLFDQIIDMLRVEQVKIHAGPKFASYLTFSPSEVKSLRTEYGDLELCIEVVDNVQDAIDHIHKYGSSHTDVIVTENENTAEFFLQHVDSACVFWNASTRFSDGYRFGLGAEVGISTSRIHARGPVGLEGLLTTKWLLRGKDHVVSDFSEHGSLKYLHENLPIPQRNTN</sequence>
<comment type="function">
    <text evidence="2">Bifunctional enzyme that converts glutamate to glutamate 5-semialdehyde, an intermediate in the biosynthesis of proline, ornithine and arginine.</text>
</comment>
<comment type="catalytic activity">
    <reaction evidence="2">
        <text>L-glutamate + ATP = L-glutamyl 5-phosphate + ADP</text>
        <dbReference type="Rhea" id="RHEA:14877"/>
        <dbReference type="ChEBI" id="CHEBI:29985"/>
        <dbReference type="ChEBI" id="CHEBI:30616"/>
        <dbReference type="ChEBI" id="CHEBI:58274"/>
        <dbReference type="ChEBI" id="CHEBI:456216"/>
        <dbReference type="EC" id="2.7.2.11"/>
    </reaction>
</comment>
<comment type="catalytic activity">
    <reaction evidence="2">
        <text>L-glutamate 5-semialdehyde + phosphate + NADP(+) = L-glutamyl 5-phosphate + NADPH + H(+)</text>
        <dbReference type="Rhea" id="RHEA:19541"/>
        <dbReference type="ChEBI" id="CHEBI:15378"/>
        <dbReference type="ChEBI" id="CHEBI:43474"/>
        <dbReference type="ChEBI" id="CHEBI:57783"/>
        <dbReference type="ChEBI" id="CHEBI:58066"/>
        <dbReference type="ChEBI" id="CHEBI:58274"/>
        <dbReference type="ChEBI" id="CHEBI:58349"/>
        <dbReference type="EC" id="1.2.1.41"/>
    </reaction>
</comment>
<comment type="pathway">
    <text evidence="2">Amino-acid biosynthesis; L-proline biosynthesis; L-glutamate 5-semialdehyde from L-glutamate: step 1/2.</text>
</comment>
<comment type="pathway">
    <text evidence="2">Amino-acid biosynthesis; L-proline biosynthesis; L-glutamate 5-semialdehyde from L-glutamate: step 2/2.</text>
</comment>
<comment type="subunit">
    <text evidence="2">Can form homodimers/multimers.</text>
</comment>
<comment type="subcellular location">
    <subcellularLocation>
        <location evidence="2">Mitochondrion matrix</location>
    </subcellularLocation>
    <text evidence="2">Exhibits puncta-like structures inside mitochondria under nutrient stress. When cellular dependence on oxidative phosphorylation increases, forms filaments, which may increase its activity, and is sequestered in a subset of atypical mitochondria that lack cristae and ATP synthase.</text>
</comment>
<comment type="similarity">
    <text evidence="4">In the N-terminal section; belongs to the glutamate 5-kinase family.</text>
</comment>
<comment type="similarity">
    <text evidence="4">In the C-terminal section; belongs to the gamma-glutamyl phosphate reductase family.</text>
</comment>